<organism>
    <name type="scientific">Natranaerobius thermophilus (strain ATCC BAA-1301 / DSM 18059 / JW/NM-WN-LF)</name>
    <dbReference type="NCBI Taxonomy" id="457570"/>
    <lineage>
        <taxon>Bacteria</taxon>
        <taxon>Bacillati</taxon>
        <taxon>Bacillota</taxon>
        <taxon>Clostridia</taxon>
        <taxon>Natranaerobiales</taxon>
        <taxon>Natranaerobiaceae</taxon>
        <taxon>Natranaerobius</taxon>
    </lineage>
</organism>
<name>RS2_NATTJ</name>
<protein>
    <recommendedName>
        <fullName evidence="1">Small ribosomal subunit protein uS2</fullName>
    </recommendedName>
    <alternativeName>
        <fullName evidence="2">30S ribosomal protein S2</fullName>
    </alternativeName>
</protein>
<sequence length="232" mass="26511">MSVVTMKQLLEAGVHFGHQTRRWNPKMKRYIFTERNGIYIVDLQKTVKKLDEAYEFVKELAANGEKIMFVGTKKQAQDAVKNEAERCEMFYVNQRWLGGMLTNFQTISKRLNRFYELEQMEEDGTFEVLPKKEVQSLRREHAKLDKFLGGLRGMEDLPGALFVIDPKKEKIAVAEARKLGIPIVSIVDTNCDPDEVDYVIPGNDDAIRAVKLITEKIADSVLEGKQGVQLAE</sequence>
<feature type="chain" id="PRO_1000115036" description="Small ribosomal subunit protein uS2">
    <location>
        <begin position="1"/>
        <end position="232"/>
    </location>
</feature>
<evidence type="ECO:0000255" key="1">
    <source>
        <dbReference type="HAMAP-Rule" id="MF_00291"/>
    </source>
</evidence>
<evidence type="ECO:0000305" key="2"/>
<gene>
    <name evidence="1" type="primary">rpsB</name>
    <name type="ordered locus">Nther_1427</name>
</gene>
<dbReference type="EMBL" id="CP001034">
    <property type="protein sequence ID" value="ACB85010.1"/>
    <property type="molecule type" value="Genomic_DNA"/>
</dbReference>
<dbReference type="RefSeq" id="WP_012447884.1">
    <property type="nucleotide sequence ID" value="NC_010718.1"/>
</dbReference>
<dbReference type="SMR" id="B2A380"/>
<dbReference type="FunCoup" id="B2A380">
    <property type="interactions" value="439"/>
</dbReference>
<dbReference type="STRING" id="457570.Nther_1427"/>
<dbReference type="KEGG" id="nth:Nther_1427"/>
<dbReference type="eggNOG" id="COG0052">
    <property type="taxonomic scope" value="Bacteria"/>
</dbReference>
<dbReference type="HOGENOM" id="CLU_040318_1_2_9"/>
<dbReference type="InParanoid" id="B2A380"/>
<dbReference type="OrthoDB" id="9808036at2"/>
<dbReference type="Proteomes" id="UP000001683">
    <property type="component" value="Chromosome"/>
</dbReference>
<dbReference type="GO" id="GO:0022627">
    <property type="term" value="C:cytosolic small ribosomal subunit"/>
    <property type="evidence" value="ECO:0007669"/>
    <property type="project" value="TreeGrafter"/>
</dbReference>
<dbReference type="GO" id="GO:0003735">
    <property type="term" value="F:structural constituent of ribosome"/>
    <property type="evidence" value="ECO:0007669"/>
    <property type="project" value="InterPro"/>
</dbReference>
<dbReference type="GO" id="GO:0006412">
    <property type="term" value="P:translation"/>
    <property type="evidence" value="ECO:0007669"/>
    <property type="project" value="UniProtKB-UniRule"/>
</dbReference>
<dbReference type="CDD" id="cd01425">
    <property type="entry name" value="RPS2"/>
    <property type="match status" value="1"/>
</dbReference>
<dbReference type="FunFam" id="1.10.287.610:FF:000001">
    <property type="entry name" value="30S ribosomal protein S2"/>
    <property type="match status" value="1"/>
</dbReference>
<dbReference type="Gene3D" id="3.40.50.10490">
    <property type="entry name" value="Glucose-6-phosphate isomerase like protein, domain 1"/>
    <property type="match status" value="1"/>
</dbReference>
<dbReference type="Gene3D" id="1.10.287.610">
    <property type="entry name" value="Helix hairpin bin"/>
    <property type="match status" value="1"/>
</dbReference>
<dbReference type="HAMAP" id="MF_00291_B">
    <property type="entry name" value="Ribosomal_uS2_B"/>
    <property type="match status" value="1"/>
</dbReference>
<dbReference type="InterPro" id="IPR001865">
    <property type="entry name" value="Ribosomal_uS2"/>
</dbReference>
<dbReference type="InterPro" id="IPR005706">
    <property type="entry name" value="Ribosomal_uS2_bac/mit/plastid"/>
</dbReference>
<dbReference type="InterPro" id="IPR018130">
    <property type="entry name" value="Ribosomal_uS2_CS"/>
</dbReference>
<dbReference type="InterPro" id="IPR023591">
    <property type="entry name" value="Ribosomal_uS2_flav_dom_sf"/>
</dbReference>
<dbReference type="NCBIfam" id="TIGR01011">
    <property type="entry name" value="rpsB_bact"/>
    <property type="match status" value="1"/>
</dbReference>
<dbReference type="PANTHER" id="PTHR12534">
    <property type="entry name" value="30S RIBOSOMAL PROTEIN S2 PROKARYOTIC AND ORGANELLAR"/>
    <property type="match status" value="1"/>
</dbReference>
<dbReference type="PANTHER" id="PTHR12534:SF0">
    <property type="entry name" value="SMALL RIBOSOMAL SUBUNIT PROTEIN US2M"/>
    <property type="match status" value="1"/>
</dbReference>
<dbReference type="Pfam" id="PF00318">
    <property type="entry name" value="Ribosomal_S2"/>
    <property type="match status" value="1"/>
</dbReference>
<dbReference type="PRINTS" id="PR00395">
    <property type="entry name" value="RIBOSOMALS2"/>
</dbReference>
<dbReference type="SUPFAM" id="SSF52313">
    <property type="entry name" value="Ribosomal protein S2"/>
    <property type="match status" value="1"/>
</dbReference>
<dbReference type="PROSITE" id="PS00962">
    <property type="entry name" value="RIBOSOMAL_S2_1"/>
    <property type="match status" value="1"/>
</dbReference>
<dbReference type="PROSITE" id="PS00963">
    <property type="entry name" value="RIBOSOMAL_S2_2"/>
    <property type="match status" value="1"/>
</dbReference>
<keyword id="KW-1185">Reference proteome</keyword>
<keyword id="KW-0687">Ribonucleoprotein</keyword>
<keyword id="KW-0689">Ribosomal protein</keyword>
<proteinExistence type="inferred from homology"/>
<comment type="similarity">
    <text evidence="1">Belongs to the universal ribosomal protein uS2 family.</text>
</comment>
<reference key="1">
    <citation type="submission" date="2008-04" db="EMBL/GenBank/DDBJ databases">
        <title>Complete sequence of chromosome of Natranaerobius thermophilus JW/NM-WN-LF.</title>
        <authorList>
            <consortium name="US DOE Joint Genome Institute"/>
            <person name="Copeland A."/>
            <person name="Lucas S."/>
            <person name="Lapidus A."/>
            <person name="Glavina del Rio T."/>
            <person name="Dalin E."/>
            <person name="Tice H."/>
            <person name="Bruce D."/>
            <person name="Goodwin L."/>
            <person name="Pitluck S."/>
            <person name="Chertkov O."/>
            <person name="Brettin T."/>
            <person name="Detter J.C."/>
            <person name="Han C."/>
            <person name="Kuske C.R."/>
            <person name="Schmutz J."/>
            <person name="Larimer F."/>
            <person name="Land M."/>
            <person name="Hauser L."/>
            <person name="Kyrpides N."/>
            <person name="Lykidis A."/>
            <person name="Mesbah N.M."/>
            <person name="Wiegel J."/>
        </authorList>
    </citation>
    <scope>NUCLEOTIDE SEQUENCE [LARGE SCALE GENOMIC DNA]</scope>
    <source>
        <strain>ATCC BAA-1301 / DSM 18059 / JW/NM-WN-LF</strain>
    </source>
</reference>
<accession>B2A380</accession>